<organism>
    <name type="scientific">Bos taurus</name>
    <name type="common">Bovine</name>
    <dbReference type="NCBI Taxonomy" id="9913"/>
    <lineage>
        <taxon>Eukaryota</taxon>
        <taxon>Metazoa</taxon>
        <taxon>Chordata</taxon>
        <taxon>Craniata</taxon>
        <taxon>Vertebrata</taxon>
        <taxon>Euteleostomi</taxon>
        <taxon>Mammalia</taxon>
        <taxon>Eutheria</taxon>
        <taxon>Laurasiatheria</taxon>
        <taxon>Artiodactyla</taxon>
        <taxon>Ruminantia</taxon>
        <taxon>Pecora</taxon>
        <taxon>Bovidae</taxon>
        <taxon>Bovinae</taxon>
        <taxon>Bos</taxon>
    </lineage>
</organism>
<sequence length="757" mass="83181">MYRRSYVFQTRKEQYERAEEAPRAAEPDRLAEARAAAPNLAALQGLGERVAAHVQRARALEQRHAVLRRQLDAFQRLDELAGPEDALARHVEGNRQRARDLAAERTRLERQGAEAQRALDEFRSKYENECECQLLLKEMLERLNKEADEALLRNLRLQIEAQFLQDDISAAKDRYKKNLLEIQTYVTILQQIIQTTPQAAAITSGMREEKLLTEREAAALQCQLEDGREMICLLQAQRTELQAQTAALEQAIRDAHECYDDEIQLYNEQIDTLRKEIEEAERSLERSSYDCRQLVVVQQTLRNELDRYHRIIENEGNRLSSAFIETPITLYTASHGASLSPRHGGKDLTRAVQDITAAKPRLKGLPKNLPRKKEMVAKDRADEILEETLLRGPEDMKPGRVVIKEEGESKLEPGDEEASPPTQEGAPEDVPDGGKISKAFEKLGKMIKEKVKGPKEPEPPADLYTKGRYVMVSGDGSFVDPGFCVFSVPAKGGVVVSKGDDSVPPDSGVEPSPQQPEPPLEEGQGPPQEKEDGLKEEGGPPEGKGEPPEGKGDSVKEEGGPPEGKGDGVKEEGGPPEGKGDGVKEEGGPPEGKGDGVKKEGEPPEGKGEGLKEEEGPLQKKEDGRPPTPHPADKGDEKNAKELKGLQGKQDDQKEEGARGPCPMVAPGPEGPSTPRSQGPQVILGGSEGHGARSGSRLARSPPRKLAYEKVEVMESIEKFSTESIQTYEETAVIVETMIEKTKANKKKLGEKGSSSA</sequence>
<keyword id="KW-0007">Acetylation</keyword>
<keyword id="KW-1003">Cell membrane</keyword>
<keyword id="KW-0175">Coiled coil</keyword>
<keyword id="KW-0963">Cytoplasm</keyword>
<keyword id="KW-0206">Cytoskeleton</keyword>
<keyword id="KW-0903">Direct protein sequencing</keyword>
<keyword id="KW-0273">Eye lens protein</keyword>
<keyword id="KW-0403">Intermediate filament</keyword>
<keyword id="KW-0449">Lipoprotein</keyword>
<keyword id="KW-0472">Membrane</keyword>
<keyword id="KW-0519">Myristate</keyword>
<keyword id="KW-0597">Phosphoprotein</keyword>
<keyword id="KW-1185">Reference proteome</keyword>
<keyword id="KW-0677">Repeat</keyword>
<name>BFSP1_BOVIN</name>
<gene>
    <name type="primary">BFSP1</name>
</gene>
<proteinExistence type="evidence at protein level"/>
<accession>Q06002</accession>
<accession>F1MH65</accession>
<reference key="1">
    <citation type="journal article" date="1993" name="J. Cell Biol.">
        <title>Bovine filensin possesses primary and secondary structure similarity to intermediate filament proteins.</title>
        <authorList>
            <person name="Gounari F."/>
            <person name="Merdes A."/>
            <person name="Quinlan R."/>
            <person name="Hess J.F."/>
            <person name="Fitzgerald P.G."/>
            <person name="Ouzounis C.A."/>
            <person name="Georgatos S.D."/>
        </authorList>
    </citation>
    <scope>NUCLEOTIDE SEQUENCE [MRNA]</scope>
    <scope>PARTIAL PROTEIN SEQUENCE</scope>
    <source>
        <tissue>Lens</tissue>
    </source>
</reference>
<reference key="2">
    <citation type="submission" date="1997-12" db="EMBL/GenBank/DDBJ databases">
        <authorList>
            <person name="Hess J.F."/>
        </authorList>
    </citation>
    <scope>SEQUENCE REVISION</scope>
</reference>
<reference evidence="13" key="3">
    <citation type="journal article" date="2009" name="Genome Biol.">
        <title>A whole-genome assembly of the domestic cow, Bos taurus.</title>
        <authorList>
            <person name="Zimin A.V."/>
            <person name="Delcher A.L."/>
            <person name="Florea L."/>
            <person name="Kelley D.R."/>
            <person name="Schatz M.C."/>
            <person name="Puiu D."/>
            <person name="Hanrahan F."/>
            <person name="Pertea G."/>
            <person name="Van Tassell C.P."/>
            <person name="Sonstegard T.S."/>
            <person name="Marcais G."/>
            <person name="Roberts M."/>
            <person name="Subramanian P."/>
            <person name="Yorke J.A."/>
            <person name="Salzberg S.L."/>
        </authorList>
    </citation>
    <scope>NUCLEOTIDE SEQUENCE [LARGE SCALE GENOMIC DNA]</scope>
    <source>
        <strain evidence="13">Hereford</strain>
    </source>
</reference>
<reference key="4">
    <citation type="journal article" date="1993" name="J. Cell Biol.">
        <title>The 47-kD lens-specific protein phakinin is a tailless intermediate filament protein and an assembly partner of filensin.</title>
        <authorList>
            <person name="Merdes A."/>
            <person name="Gounari F."/>
            <person name="Georgatos S.D."/>
        </authorList>
    </citation>
    <scope>SUBCELLULAR LOCATION</scope>
    <scope>TISSUE SPECIFICITY</scope>
    <source>
        <tissue>Lens</tissue>
    </source>
</reference>
<reference key="5">
    <citation type="journal article" date="1995" name="Eur. J. Cell Biol.">
        <title>Filensin is proteolytically processed during lens fiber cell differentiation by multiple independent pathways.</title>
        <authorList>
            <person name="Sandilands A."/>
            <person name="Prescott A.R."/>
            <person name="Hutcheson A.M."/>
            <person name="Quinlan R.A."/>
            <person name="Casselman J.T."/>
            <person name="FitzGerald P.G."/>
        </authorList>
    </citation>
    <scope>SUBCELLULAR LOCATION</scope>
    <scope>TISSUE SPECIFICITY</scope>
    <scope>PROTEOLYTIC CLEAVAGE</scope>
</reference>
<reference key="6">
    <citation type="journal article" date="2010" name="Invest. Ophthalmol. Vis. Sci.">
        <title>Posttranslational modifications of the bovine lens beaded filament proteins filensin and CP49.</title>
        <authorList>
            <person name="Wang Z."/>
            <person name="Obidike J.E."/>
            <person name="Schey K.L."/>
        </authorList>
    </citation>
    <scope>IDENTIFICATION BY MASS SPECTROMETRY</scope>
    <scope>TISSUE SPECIFICITY</scope>
    <scope>PROTEOLYTIC CLEAVAGE</scope>
    <scope>MYRISTOYLATION AT GLY-433</scope>
    <scope>ACETYLATION AT ALA-41</scope>
    <scope>PHOSPHORYLATION AT SER-5; SER-340; SER-419; SER-512; THR-628; THR-674; SER-701; SER-754 AND SER-755</scope>
</reference>
<reference key="7">
    <citation type="journal article" date="2017" name="Exp. Eye Res.">
        <title>Identification of a direct Aquaporin-0 binding site in the lens-specific cytoskeletal protein filensin.</title>
        <authorList>
            <person name="Wang Z."/>
            <person name="Schey K.L."/>
        </authorList>
    </citation>
    <scope>INTERACTION WITH MIP</scope>
</reference>
<feature type="chain" id="PRO_0000063846" description="Filensin">
    <location>
        <begin position="1"/>
        <end position="757"/>
    </location>
</feature>
<feature type="chain" id="PRO_0000448668" description="Filensin N-terminal fragment" evidence="12">
    <location>
        <begin position="41"/>
        <end position="432"/>
    </location>
</feature>
<feature type="chain" id="PRO_0000448669" description="Filensin C-terminal fragment" evidence="12">
    <location>
        <begin position="433"/>
        <end position="757"/>
    </location>
</feature>
<feature type="domain" description="IF rod" evidence="3">
    <location>
        <begin position="39"/>
        <end position="319"/>
    </location>
</feature>
<feature type="repeat" description="1">
    <location>
        <begin position="532"/>
        <end position="545"/>
    </location>
</feature>
<feature type="repeat" description="2; truncated">
    <location>
        <begin position="546"/>
        <end position="552"/>
    </location>
</feature>
<feature type="repeat" description="3">
    <location>
        <begin position="553"/>
        <end position="566"/>
    </location>
</feature>
<feature type="repeat" description="4">
    <location>
        <begin position="567"/>
        <end position="580"/>
    </location>
</feature>
<feature type="repeat" description="5">
    <location>
        <begin position="581"/>
        <end position="594"/>
    </location>
</feature>
<feature type="repeat" description="6">
    <location>
        <begin position="595"/>
        <end position="608"/>
    </location>
</feature>
<feature type="repeat" description="7">
    <location>
        <begin position="609"/>
        <end position="622"/>
    </location>
</feature>
<feature type="region of interest" description="Head">
    <location>
        <begin position="1"/>
        <end position="39"/>
    </location>
</feature>
<feature type="region of interest" description="Coil 1A">
    <location>
        <begin position="40"/>
        <end position="74"/>
    </location>
</feature>
<feature type="region of interest" description="Linker 1">
    <location>
        <begin position="75"/>
        <end position="83"/>
    </location>
</feature>
<feature type="region of interest" description="Coil 1B">
    <location>
        <begin position="84"/>
        <end position="183"/>
    </location>
</feature>
<feature type="region of interest" description="Linker 12">
    <location>
        <begin position="184"/>
        <end position="200"/>
    </location>
</feature>
<feature type="region of interest" description="Coil 2">
    <location>
        <begin position="201"/>
        <end position="319"/>
    </location>
</feature>
<feature type="region of interest" description="Tail">
    <location>
        <begin position="320"/>
        <end position="756"/>
    </location>
</feature>
<feature type="region of interest" description="Disordered" evidence="4">
    <location>
        <begin position="406"/>
        <end position="436"/>
    </location>
</feature>
<feature type="region of interest" description="Disordered" evidence="4">
    <location>
        <begin position="493"/>
        <end position="705"/>
    </location>
</feature>
<feature type="region of interest" description="7 X 14 AA tandem repeats">
    <location>
        <begin position="532"/>
        <end position="622"/>
    </location>
</feature>
<feature type="compositionally biased region" description="Low complexity" evidence="4">
    <location>
        <begin position="493"/>
        <end position="512"/>
    </location>
</feature>
<feature type="compositionally biased region" description="Basic and acidic residues" evidence="4">
    <location>
        <begin position="528"/>
        <end position="658"/>
    </location>
</feature>
<feature type="site" description="Cleavage" evidence="5">
    <location>
        <begin position="40"/>
        <end position="41"/>
    </location>
</feature>
<feature type="site" description="Cleavage (by CASP2, CASP3, and CASP7)" evidence="5">
    <location>
        <begin position="432"/>
        <end position="433"/>
    </location>
</feature>
<feature type="site" description="Interaction with MIP" evidence="6">
    <location>
        <position position="456"/>
    </location>
</feature>
<feature type="modified residue" description="Phosphoserine" evidence="5">
    <location>
        <position position="5"/>
    </location>
</feature>
<feature type="modified residue" description="N-acetylalanine" evidence="5">
    <location>
        <position position="41"/>
    </location>
</feature>
<feature type="modified residue" description="Phosphoserine" evidence="5">
    <location>
        <position position="340"/>
    </location>
</feature>
<feature type="modified residue" description="Phosphoserine" evidence="5">
    <location>
        <position position="419"/>
    </location>
</feature>
<feature type="modified residue" description="Phosphoserine" evidence="5">
    <location>
        <position position="512"/>
    </location>
</feature>
<feature type="modified residue" description="Phosphothreonine" evidence="5">
    <location>
        <position position="628"/>
    </location>
</feature>
<feature type="modified residue" description="Phosphothreonine" evidence="5">
    <location>
        <position position="674"/>
    </location>
</feature>
<feature type="modified residue" description="Phosphoserine" evidence="5">
    <location>
        <position position="701"/>
    </location>
</feature>
<feature type="modified residue" description="Phosphoserine" evidence="5">
    <location>
        <position position="754"/>
    </location>
</feature>
<feature type="modified residue" description="Phosphoserine" evidence="5">
    <location>
        <position position="755"/>
    </location>
</feature>
<feature type="lipid moiety-binding region" description="N-myristoyl glycine" evidence="5">
    <location>
        <position position="433"/>
    </location>
</feature>
<feature type="sequence conflict" description="In Ref. 2; CAA51081." evidence="11" ref="2">
    <original>AP</original>
    <variation>G</variation>
    <location>
        <begin position="21"/>
        <end position="22"/>
    </location>
</feature>
<feature type="sequence conflict" description="In Ref. 2; CAA51081." evidence="11" ref="2">
    <original>D</original>
    <variation>G</variation>
    <location>
        <position position="166"/>
    </location>
</feature>
<feature type="sequence conflict" description="In Ref. 2; CAA51081." evidence="11" ref="2">
    <original>E</original>
    <variation>R</variation>
    <location>
        <position position="208"/>
    </location>
</feature>
<feature type="sequence conflict" description="In Ref. 2; CAA51081." evidence="11" ref="2">
    <original>KKEDGRP</original>
    <variation>EKEDGQS</variation>
    <location>
        <begin position="620"/>
        <end position="626"/>
    </location>
</feature>
<comment type="function">
    <text evidence="1 2">Required for the correct formation of lens intermediate filaments as part of a complex composed of BFSP1, BFSP2 and CRYAA (By similarity). Involved in altering the calcium regulation of MIP water permeability (By similarity).</text>
</comment>
<comment type="subunit">
    <text evidence="1 2 6">Part of a complex required for lens intermediate filament formation composed of BFSP1, BFSP2 and CRYAA (By similarity). Identified in a complex that contains VIM, EZR, AHNAK, BFSP1, BFSP2, ANK2, PLEC, PRX and spectrin (By similarity). Found in a complex composed of PPL (via C-terminal linker domain), BFSP1 and BFSP2 in the retinal lens (By similarity). Within the complex interacts with BFSP2 (By similarity). Interacts (via C-terminus) with MIP (via C-terminus) in aged lens fiber cells (PubMed:28259670).</text>
</comment>
<comment type="subcellular location">
    <subcellularLocation>
        <location evidence="7 8">Cell membrane</location>
        <topology evidence="7">Peripheral membrane protein</topology>
        <orientation evidence="7">Cytoplasmic side</orientation>
    </subcellularLocation>
    <subcellularLocation>
        <location evidence="8">Cytoplasm</location>
    </subcellularLocation>
    <subcellularLocation>
        <location evidence="7">Cytoplasm</location>
        <location evidence="7">Cytoskeleton</location>
    </subcellularLocation>
    <subcellularLocation>
        <location evidence="7">Cytoplasm</location>
        <location evidence="7">Cell cortex</location>
    </subcellularLocation>
</comment>
<comment type="tissue specificity">
    <text evidence="5 7 8">Abundantly expressed in both the inner and outer cortex of the retina, expressed at a lower level in the nucleus of the retina (at protein level) (PubMed:19875662). Detected in eye lens fiber cells (at protein level) (PubMed:7504675, PubMed:7588880).</text>
</comment>
<comment type="PTM">
    <text evidence="8">Proteolytically cleaved during lens cell fiber differentiation with increased fragmentation as fiber cell age increases.</text>
</comment>
<comment type="PTM">
    <molecule>Filensin C-terminal fragment</molecule>
    <text evidence="5">Myristoylated at Gly-433 following proteolytic cleavage at Asp-432.</text>
</comment>
<comment type="PTM">
    <molecule>Filensin N-terminal fragment</molecule>
    <text evidence="5">Acetylated at Ala-41 following proteolytic cleavage at Leu-40.</text>
</comment>
<comment type="similarity">
    <text evidence="3">Belongs to the intermediate filament family.</text>
</comment>
<protein>
    <recommendedName>
        <fullName evidence="10">Filensin</fullName>
    </recommendedName>
    <alternativeName>
        <fullName>Beaded filament structural protein 1</fullName>
    </alternativeName>
    <component>
        <recommendedName>
            <fullName evidence="9">Filensin C-terminal fragment</fullName>
        </recommendedName>
    </component>
    <component>
        <recommendedName>
            <fullName evidence="9">Filensin N-terminal fragment</fullName>
        </recommendedName>
    </component>
</protein>
<evidence type="ECO:0000250" key="1">
    <source>
        <dbReference type="UniProtKB" id="A2AMT1"/>
    </source>
</evidence>
<evidence type="ECO:0000250" key="2">
    <source>
        <dbReference type="UniProtKB" id="Q12934"/>
    </source>
</evidence>
<evidence type="ECO:0000255" key="3">
    <source>
        <dbReference type="PROSITE-ProRule" id="PRU01188"/>
    </source>
</evidence>
<evidence type="ECO:0000256" key="4">
    <source>
        <dbReference type="SAM" id="MobiDB-lite"/>
    </source>
</evidence>
<evidence type="ECO:0000269" key="5">
    <source>
    </source>
</evidence>
<evidence type="ECO:0000269" key="6">
    <source>
    </source>
</evidence>
<evidence type="ECO:0000269" key="7">
    <source>
    </source>
</evidence>
<evidence type="ECO:0000269" key="8">
    <source>
    </source>
</evidence>
<evidence type="ECO:0000303" key="9">
    <source>
    </source>
</evidence>
<evidence type="ECO:0000303" key="10">
    <source>
    </source>
</evidence>
<evidence type="ECO:0000305" key="11"/>
<evidence type="ECO:0000305" key="12">
    <source>
    </source>
</evidence>
<evidence type="ECO:0000312" key="13">
    <source>
        <dbReference type="Proteomes" id="UP000009136"/>
    </source>
</evidence>
<dbReference type="EMBL" id="X72388">
    <property type="protein sequence ID" value="CAA51081.1"/>
    <property type="molecule type" value="mRNA"/>
</dbReference>
<dbReference type="PIR" id="S32103">
    <property type="entry name" value="S32103"/>
</dbReference>
<dbReference type="SMR" id="Q06002"/>
<dbReference type="FunCoup" id="Q06002">
    <property type="interactions" value="70"/>
</dbReference>
<dbReference type="STRING" id="9913.ENSBTAP00000029150"/>
<dbReference type="iPTMnet" id="Q06002"/>
<dbReference type="PaxDb" id="9913-ENSBTAP00000029150"/>
<dbReference type="Ensembl" id="ENSBTAT00000114688.1">
    <property type="protein sequence ID" value="ENSBTAP00000098829.1"/>
    <property type="gene ID" value="ENSBTAG00000021867.7"/>
</dbReference>
<dbReference type="VEuPathDB" id="HostDB:ENSBTAG00000021867"/>
<dbReference type="VGNC" id="VGNC:26478">
    <property type="gene designation" value="BFSP1"/>
</dbReference>
<dbReference type="eggNOG" id="ENOG502QRCH">
    <property type="taxonomic scope" value="Eukaryota"/>
</dbReference>
<dbReference type="GeneTree" id="ENSGT00390000016976"/>
<dbReference type="HOGENOM" id="CLU_028949_0_0_1"/>
<dbReference type="InParanoid" id="Q06002"/>
<dbReference type="OMA" id="IQTTPRV"/>
<dbReference type="OrthoDB" id="9942423at2759"/>
<dbReference type="TreeFam" id="TF331671"/>
<dbReference type="Proteomes" id="UP000009136">
    <property type="component" value="Chromosome 13"/>
</dbReference>
<dbReference type="Bgee" id="ENSBTAG00000021867">
    <property type="expression patterns" value="Expressed in pigment epithelium of eye and 66 other cell types or tissues"/>
</dbReference>
<dbReference type="GO" id="GO:0005938">
    <property type="term" value="C:cell cortex"/>
    <property type="evidence" value="ECO:0007669"/>
    <property type="project" value="UniProtKB-SubCell"/>
</dbReference>
<dbReference type="GO" id="GO:0005737">
    <property type="term" value="C:cytoplasm"/>
    <property type="evidence" value="ECO:0000250"/>
    <property type="project" value="UniProtKB"/>
</dbReference>
<dbReference type="GO" id="GO:0005882">
    <property type="term" value="C:intermediate filament"/>
    <property type="evidence" value="ECO:0000250"/>
    <property type="project" value="UniProtKB"/>
</dbReference>
<dbReference type="GO" id="GO:0005886">
    <property type="term" value="C:plasma membrane"/>
    <property type="evidence" value="ECO:0000250"/>
    <property type="project" value="UniProtKB"/>
</dbReference>
<dbReference type="GO" id="GO:0005212">
    <property type="term" value="F:structural constituent of eye lens"/>
    <property type="evidence" value="ECO:0000318"/>
    <property type="project" value="GO_Central"/>
</dbReference>
<dbReference type="GO" id="GO:0045109">
    <property type="term" value="P:intermediate filament organization"/>
    <property type="evidence" value="ECO:0000250"/>
    <property type="project" value="UniProtKB"/>
</dbReference>
<dbReference type="GO" id="GO:0070307">
    <property type="term" value="P:lens fiber cell development"/>
    <property type="evidence" value="ECO:0000318"/>
    <property type="project" value="GO_Central"/>
</dbReference>
<dbReference type="FunFam" id="1.20.5.170:FF:000094">
    <property type="entry name" value="Beaded filament structural protein 1"/>
    <property type="match status" value="1"/>
</dbReference>
<dbReference type="FunFam" id="1.20.5.1160:FF:000009">
    <property type="entry name" value="filensin isoform X2"/>
    <property type="match status" value="1"/>
</dbReference>
<dbReference type="Gene3D" id="1.20.5.170">
    <property type="match status" value="1"/>
</dbReference>
<dbReference type="Gene3D" id="1.20.5.1160">
    <property type="entry name" value="Vasodilator-stimulated phosphoprotein"/>
    <property type="match status" value="1"/>
</dbReference>
<dbReference type="InterPro" id="IPR042358">
    <property type="entry name" value="BFSP1"/>
</dbReference>
<dbReference type="InterPro" id="IPR039008">
    <property type="entry name" value="IF_rod_dom"/>
</dbReference>
<dbReference type="PANTHER" id="PTHR14069">
    <property type="entry name" value="FILENSIN"/>
    <property type="match status" value="1"/>
</dbReference>
<dbReference type="PANTHER" id="PTHR14069:SF0">
    <property type="entry name" value="FILENSIN"/>
    <property type="match status" value="1"/>
</dbReference>
<dbReference type="Pfam" id="PF00038">
    <property type="entry name" value="Filament"/>
    <property type="match status" value="1"/>
</dbReference>
<dbReference type="SMART" id="SM01391">
    <property type="entry name" value="Filament"/>
    <property type="match status" value="1"/>
</dbReference>
<dbReference type="SUPFAM" id="SSF64593">
    <property type="entry name" value="Intermediate filament protein, coiled coil region"/>
    <property type="match status" value="1"/>
</dbReference>
<dbReference type="PROSITE" id="PS51842">
    <property type="entry name" value="IF_ROD_2"/>
    <property type="match status" value="1"/>
</dbReference>